<comment type="function">
    <text evidence="1">Involved in DNA repair and RecF pathway recombination.</text>
</comment>
<comment type="similarity">
    <text evidence="1">Belongs to the RecO family.</text>
</comment>
<reference key="1">
    <citation type="submission" date="2005-11" db="EMBL/GenBank/DDBJ databases">
        <title>The complete genome sequence of Lawsonia intracellularis: the causative agent of proliferative enteropathy.</title>
        <authorList>
            <person name="Kaur K."/>
            <person name="Zhang Q."/>
            <person name="Beckler D."/>
            <person name="Munir S."/>
            <person name="Li L."/>
            <person name="Kinsley K."/>
            <person name="Herron L."/>
            <person name="Peterson A."/>
            <person name="May B."/>
            <person name="Singh S."/>
            <person name="Gebhart C."/>
            <person name="Kapur V."/>
        </authorList>
    </citation>
    <scope>NUCLEOTIDE SEQUENCE [LARGE SCALE GENOMIC DNA]</scope>
    <source>
        <strain>PHE/MN1-00</strain>
    </source>
</reference>
<protein>
    <recommendedName>
        <fullName evidence="1">DNA repair protein RecO</fullName>
    </recommendedName>
    <alternativeName>
        <fullName evidence="1">Recombination protein O</fullName>
    </alternativeName>
</protein>
<accession>Q1MRL9</accession>
<organism>
    <name type="scientific">Lawsonia intracellularis (strain PHE/MN1-00)</name>
    <dbReference type="NCBI Taxonomy" id="363253"/>
    <lineage>
        <taxon>Bacteria</taxon>
        <taxon>Pseudomonadati</taxon>
        <taxon>Thermodesulfobacteriota</taxon>
        <taxon>Desulfovibrionia</taxon>
        <taxon>Desulfovibrionales</taxon>
        <taxon>Desulfovibrionaceae</taxon>
        <taxon>Lawsonia</taxon>
    </lineage>
</organism>
<evidence type="ECO:0000255" key="1">
    <source>
        <dbReference type="HAMAP-Rule" id="MF_00201"/>
    </source>
</evidence>
<keyword id="KW-0227">DNA damage</keyword>
<keyword id="KW-0233">DNA recombination</keyword>
<keyword id="KW-0234">DNA repair</keyword>
<keyword id="KW-1185">Reference proteome</keyword>
<gene>
    <name evidence="1" type="primary">recO</name>
    <name type="ordered locus">LI0301</name>
</gene>
<dbReference type="EMBL" id="AM180252">
    <property type="protein sequence ID" value="CAJ54357.1"/>
    <property type="molecule type" value="Genomic_DNA"/>
</dbReference>
<dbReference type="RefSeq" id="WP_011526386.1">
    <property type="nucleotide sequence ID" value="NC_008011.1"/>
</dbReference>
<dbReference type="SMR" id="Q1MRL9"/>
<dbReference type="STRING" id="363253.LI0301"/>
<dbReference type="KEGG" id="lip:LI0301"/>
<dbReference type="eggNOG" id="COG1381">
    <property type="taxonomic scope" value="Bacteria"/>
</dbReference>
<dbReference type="HOGENOM" id="CLU_066632_2_1_7"/>
<dbReference type="OrthoDB" id="9780797at2"/>
<dbReference type="Proteomes" id="UP000002430">
    <property type="component" value="Chromosome"/>
</dbReference>
<dbReference type="GO" id="GO:0043590">
    <property type="term" value="C:bacterial nucleoid"/>
    <property type="evidence" value="ECO:0007669"/>
    <property type="project" value="TreeGrafter"/>
</dbReference>
<dbReference type="GO" id="GO:0006310">
    <property type="term" value="P:DNA recombination"/>
    <property type="evidence" value="ECO:0007669"/>
    <property type="project" value="UniProtKB-UniRule"/>
</dbReference>
<dbReference type="GO" id="GO:0006302">
    <property type="term" value="P:double-strand break repair"/>
    <property type="evidence" value="ECO:0007669"/>
    <property type="project" value="TreeGrafter"/>
</dbReference>
<dbReference type="Gene3D" id="2.40.50.140">
    <property type="entry name" value="Nucleic acid-binding proteins"/>
    <property type="match status" value="1"/>
</dbReference>
<dbReference type="Gene3D" id="1.20.1440.120">
    <property type="entry name" value="Recombination protein O, C-terminal domain"/>
    <property type="match status" value="1"/>
</dbReference>
<dbReference type="HAMAP" id="MF_00201">
    <property type="entry name" value="RecO"/>
    <property type="match status" value="1"/>
</dbReference>
<dbReference type="InterPro" id="IPR037278">
    <property type="entry name" value="ARFGAP/RecO"/>
</dbReference>
<dbReference type="InterPro" id="IPR022572">
    <property type="entry name" value="DNA_rep/recomb_RecO_N"/>
</dbReference>
<dbReference type="InterPro" id="IPR012340">
    <property type="entry name" value="NA-bd_OB-fold"/>
</dbReference>
<dbReference type="InterPro" id="IPR003717">
    <property type="entry name" value="RecO"/>
</dbReference>
<dbReference type="InterPro" id="IPR042242">
    <property type="entry name" value="RecO_C"/>
</dbReference>
<dbReference type="NCBIfam" id="TIGR00613">
    <property type="entry name" value="reco"/>
    <property type="match status" value="1"/>
</dbReference>
<dbReference type="PANTHER" id="PTHR33991">
    <property type="entry name" value="DNA REPAIR PROTEIN RECO"/>
    <property type="match status" value="1"/>
</dbReference>
<dbReference type="PANTHER" id="PTHR33991:SF1">
    <property type="entry name" value="DNA REPAIR PROTEIN RECO"/>
    <property type="match status" value="1"/>
</dbReference>
<dbReference type="Pfam" id="PF02565">
    <property type="entry name" value="RecO_C"/>
    <property type="match status" value="1"/>
</dbReference>
<dbReference type="Pfam" id="PF11967">
    <property type="entry name" value="RecO_N"/>
    <property type="match status" value="1"/>
</dbReference>
<dbReference type="SUPFAM" id="SSF57863">
    <property type="entry name" value="ArfGap/RecO-like zinc finger"/>
    <property type="match status" value="1"/>
</dbReference>
<dbReference type="SUPFAM" id="SSF50249">
    <property type="entry name" value="Nucleic acid-binding proteins"/>
    <property type="match status" value="1"/>
</dbReference>
<feature type="chain" id="PRO_1000193385" description="DNA repair protein RecO">
    <location>
        <begin position="1"/>
        <end position="249"/>
    </location>
</feature>
<name>RECO_LAWIP</name>
<sequence length="249" mass="28269">MEWLDNAIILELGSFRESDVWVKLLTSQHGVISAFAFGGHRSRRRFCGCLGILNEIQVRVQTSRNGRFLNLQEASLINGPIQLRTNKNRFGAFINCIRFLEVVGVSSDAAPPVYTLMKELFYFFEKNTQPYEIIPILFRLRIASEQGYAPIFSNCAKCGRLINNKGFFGISDGIIVCSICINYIKTPIAIGYESLELLKRVQLASPYDWKLSENTKSAAAQKYECTEIINAFVEYHLGITWSKGRFLKV</sequence>
<proteinExistence type="inferred from homology"/>